<gene>
    <name evidence="1" type="primary">glmM</name>
    <name type="ordered locus">BURPS1710b_1617</name>
</gene>
<accession>Q3JTT2</accession>
<comment type="function">
    <text evidence="1">Catalyzes the conversion of glucosamine-6-phosphate to glucosamine-1-phosphate.</text>
</comment>
<comment type="catalytic activity">
    <reaction evidence="1">
        <text>alpha-D-glucosamine 1-phosphate = D-glucosamine 6-phosphate</text>
        <dbReference type="Rhea" id="RHEA:23424"/>
        <dbReference type="ChEBI" id="CHEBI:58516"/>
        <dbReference type="ChEBI" id="CHEBI:58725"/>
        <dbReference type="EC" id="5.4.2.10"/>
    </reaction>
</comment>
<comment type="cofactor">
    <cofactor evidence="1">
        <name>Mg(2+)</name>
        <dbReference type="ChEBI" id="CHEBI:18420"/>
    </cofactor>
    <text evidence="1">Binds 1 Mg(2+) ion per subunit.</text>
</comment>
<comment type="PTM">
    <text evidence="1">Activated by phosphorylation.</text>
</comment>
<comment type="similarity">
    <text evidence="1">Belongs to the phosphohexose mutase family.</text>
</comment>
<name>GLMM_BURP1</name>
<feature type="chain" id="PRO_0000301292" description="Phosphoglucosamine mutase">
    <location>
        <begin position="1"/>
        <end position="452"/>
    </location>
</feature>
<feature type="active site" description="Phosphoserine intermediate" evidence="1">
    <location>
        <position position="108"/>
    </location>
</feature>
<feature type="binding site" description="via phosphate group" evidence="1">
    <location>
        <position position="108"/>
    </location>
    <ligand>
        <name>Mg(2+)</name>
        <dbReference type="ChEBI" id="CHEBI:18420"/>
    </ligand>
</feature>
<feature type="binding site" evidence="1">
    <location>
        <position position="247"/>
    </location>
    <ligand>
        <name>Mg(2+)</name>
        <dbReference type="ChEBI" id="CHEBI:18420"/>
    </ligand>
</feature>
<feature type="binding site" evidence="1">
    <location>
        <position position="249"/>
    </location>
    <ligand>
        <name>Mg(2+)</name>
        <dbReference type="ChEBI" id="CHEBI:18420"/>
    </ligand>
</feature>
<feature type="binding site" evidence="1">
    <location>
        <position position="251"/>
    </location>
    <ligand>
        <name>Mg(2+)</name>
        <dbReference type="ChEBI" id="CHEBI:18420"/>
    </ligand>
</feature>
<feature type="modified residue" description="Phosphoserine" evidence="1">
    <location>
        <position position="108"/>
    </location>
</feature>
<protein>
    <recommendedName>
        <fullName evidence="1">Phosphoglucosamine mutase</fullName>
        <ecNumber evidence="1">5.4.2.10</ecNumber>
    </recommendedName>
</protein>
<evidence type="ECO:0000255" key="1">
    <source>
        <dbReference type="HAMAP-Rule" id="MF_01554"/>
    </source>
</evidence>
<reference key="1">
    <citation type="journal article" date="2010" name="Genome Biol. Evol.">
        <title>Continuing evolution of Burkholderia mallei through genome reduction and large-scale rearrangements.</title>
        <authorList>
            <person name="Losada L."/>
            <person name="Ronning C.M."/>
            <person name="DeShazer D."/>
            <person name="Woods D."/>
            <person name="Fedorova N."/>
            <person name="Kim H.S."/>
            <person name="Shabalina S.A."/>
            <person name="Pearson T.R."/>
            <person name="Brinkac L."/>
            <person name="Tan P."/>
            <person name="Nandi T."/>
            <person name="Crabtree J."/>
            <person name="Badger J."/>
            <person name="Beckstrom-Sternberg S."/>
            <person name="Saqib M."/>
            <person name="Schutzer S.E."/>
            <person name="Keim P."/>
            <person name="Nierman W.C."/>
        </authorList>
    </citation>
    <scope>NUCLEOTIDE SEQUENCE [LARGE SCALE GENOMIC DNA]</scope>
    <source>
        <strain>1710b</strain>
    </source>
</reference>
<dbReference type="EC" id="5.4.2.10" evidence="1"/>
<dbReference type="EMBL" id="CP000124">
    <property type="protein sequence ID" value="ABA47857.1"/>
    <property type="molecule type" value="Genomic_DNA"/>
</dbReference>
<dbReference type="RefSeq" id="WP_004266863.1">
    <property type="nucleotide sequence ID" value="NC_007434.1"/>
</dbReference>
<dbReference type="SMR" id="Q3JTT2"/>
<dbReference type="EnsemblBacteria" id="ABA47857">
    <property type="protein sequence ID" value="ABA47857"/>
    <property type="gene ID" value="BURPS1710b_1617"/>
</dbReference>
<dbReference type="GeneID" id="93059857"/>
<dbReference type="KEGG" id="bpm:BURPS1710b_1617"/>
<dbReference type="HOGENOM" id="CLU_016950_7_0_4"/>
<dbReference type="Proteomes" id="UP000002700">
    <property type="component" value="Chromosome I"/>
</dbReference>
<dbReference type="GO" id="GO:0005829">
    <property type="term" value="C:cytosol"/>
    <property type="evidence" value="ECO:0007669"/>
    <property type="project" value="TreeGrafter"/>
</dbReference>
<dbReference type="GO" id="GO:0000287">
    <property type="term" value="F:magnesium ion binding"/>
    <property type="evidence" value="ECO:0007669"/>
    <property type="project" value="UniProtKB-UniRule"/>
</dbReference>
<dbReference type="GO" id="GO:0008966">
    <property type="term" value="F:phosphoglucosamine mutase activity"/>
    <property type="evidence" value="ECO:0007669"/>
    <property type="project" value="UniProtKB-UniRule"/>
</dbReference>
<dbReference type="GO" id="GO:0004615">
    <property type="term" value="F:phosphomannomutase activity"/>
    <property type="evidence" value="ECO:0007669"/>
    <property type="project" value="TreeGrafter"/>
</dbReference>
<dbReference type="GO" id="GO:0005975">
    <property type="term" value="P:carbohydrate metabolic process"/>
    <property type="evidence" value="ECO:0007669"/>
    <property type="project" value="InterPro"/>
</dbReference>
<dbReference type="GO" id="GO:0009252">
    <property type="term" value="P:peptidoglycan biosynthetic process"/>
    <property type="evidence" value="ECO:0007669"/>
    <property type="project" value="TreeGrafter"/>
</dbReference>
<dbReference type="GO" id="GO:0006048">
    <property type="term" value="P:UDP-N-acetylglucosamine biosynthetic process"/>
    <property type="evidence" value="ECO:0007669"/>
    <property type="project" value="TreeGrafter"/>
</dbReference>
<dbReference type="CDD" id="cd05802">
    <property type="entry name" value="GlmM"/>
    <property type="match status" value="1"/>
</dbReference>
<dbReference type="FunFam" id="3.30.310.50:FF:000001">
    <property type="entry name" value="Phosphoglucosamine mutase"/>
    <property type="match status" value="1"/>
</dbReference>
<dbReference type="FunFam" id="3.40.120.10:FF:000001">
    <property type="entry name" value="Phosphoglucosamine mutase"/>
    <property type="match status" value="1"/>
</dbReference>
<dbReference type="FunFam" id="3.40.120.10:FF:000003">
    <property type="entry name" value="Phosphoglucosamine mutase"/>
    <property type="match status" value="1"/>
</dbReference>
<dbReference type="Gene3D" id="3.40.120.10">
    <property type="entry name" value="Alpha-D-Glucose-1,6-Bisphosphate, subunit A, domain 3"/>
    <property type="match status" value="3"/>
</dbReference>
<dbReference type="Gene3D" id="3.30.310.50">
    <property type="entry name" value="Alpha-D-phosphohexomutase, C-terminal domain"/>
    <property type="match status" value="1"/>
</dbReference>
<dbReference type="HAMAP" id="MF_01554_B">
    <property type="entry name" value="GlmM_B"/>
    <property type="match status" value="1"/>
</dbReference>
<dbReference type="InterPro" id="IPR005844">
    <property type="entry name" value="A-D-PHexomutase_a/b/a-I"/>
</dbReference>
<dbReference type="InterPro" id="IPR016055">
    <property type="entry name" value="A-D-PHexomutase_a/b/a-I/II/III"/>
</dbReference>
<dbReference type="InterPro" id="IPR005845">
    <property type="entry name" value="A-D-PHexomutase_a/b/a-II"/>
</dbReference>
<dbReference type="InterPro" id="IPR005846">
    <property type="entry name" value="A-D-PHexomutase_a/b/a-III"/>
</dbReference>
<dbReference type="InterPro" id="IPR005843">
    <property type="entry name" value="A-D-PHexomutase_C"/>
</dbReference>
<dbReference type="InterPro" id="IPR036900">
    <property type="entry name" value="A-D-PHexomutase_C_sf"/>
</dbReference>
<dbReference type="InterPro" id="IPR016066">
    <property type="entry name" value="A-D-PHexomutase_CS"/>
</dbReference>
<dbReference type="InterPro" id="IPR005841">
    <property type="entry name" value="Alpha-D-phosphohexomutase_SF"/>
</dbReference>
<dbReference type="InterPro" id="IPR006352">
    <property type="entry name" value="GlmM_bact"/>
</dbReference>
<dbReference type="InterPro" id="IPR050060">
    <property type="entry name" value="Phosphoglucosamine_mutase"/>
</dbReference>
<dbReference type="NCBIfam" id="TIGR01455">
    <property type="entry name" value="glmM"/>
    <property type="match status" value="1"/>
</dbReference>
<dbReference type="NCBIfam" id="NF008139">
    <property type="entry name" value="PRK10887.1"/>
    <property type="match status" value="1"/>
</dbReference>
<dbReference type="PANTHER" id="PTHR42946:SF1">
    <property type="entry name" value="PHOSPHOGLUCOMUTASE (ALPHA-D-GLUCOSE-1,6-BISPHOSPHATE-DEPENDENT)"/>
    <property type="match status" value="1"/>
</dbReference>
<dbReference type="PANTHER" id="PTHR42946">
    <property type="entry name" value="PHOSPHOHEXOSE MUTASE"/>
    <property type="match status" value="1"/>
</dbReference>
<dbReference type="Pfam" id="PF02878">
    <property type="entry name" value="PGM_PMM_I"/>
    <property type="match status" value="1"/>
</dbReference>
<dbReference type="Pfam" id="PF02879">
    <property type="entry name" value="PGM_PMM_II"/>
    <property type="match status" value="1"/>
</dbReference>
<dbReference type="Pfam" id="PF02880">
    <property type="entry name" value="PGM_PMM_III"/>
    <property type="match status" value="1"/>
</dbReference>
<dbReference type="Pfam" id="PF00408">
    <property type="entry name" value="PGM_PMM_IV"/>
    <property type="match status" value="1"/>
</dbReference>
<dbReference type="PRINTS" id="PR00509">
    <property type="entry name" value="PGMPMM"/>
</dbReference>
<dbReference type="SUPFAM" id="SSF55957">
    <property type="entry name" value="Phosphoglucomutase, C-terminal domain"/>
    <property type="match status" value="1"/>
</dbReference>
<dbReference type="SUPFAM" id="SSF53738">
    <property type="entry name" value="Phosphoglucomutase, first 3 domains"/>
    <property type="match status" value="3"/>
</dbReference>
<dbReference type="PROSITE" id="PS00710">
    <property type="entry name" value="PGM_PMM"/>
    <property type="match status" value="1"/>
</dbReference>
<keyword id="KW-0413">Isomerase</keyword>
<keyword id="KW-0460">Magnesium</keyword>
<keyword id="KW-0479">Metal-binding</keyword>
<keyword id="KW-0597">Phosphoprotein</keyword>
<organism>
    <name type="scientific">Burkholderia pseudomallei (strain 1710b)</name>
    <dbReference type="NCBI Taxonomy" id="320372"/>
    <lineage>
        <taxon>Bacteria</taxon>
        <taxon>Pseudomonadati</taxon>
        <taxon>Pseudomonadota</taxon>
        <taxon>Betaproteobacteria</taxon>
        <taxon>Burkholderiales</taxon>
        <taxon>Burkholderiaceae</taxon>
        <taxon>Burkholderia</taxon>
        <taxon>pseudomallei group</taxon>
    </lineage>
</organism>
<sequence>MGRRYFGTDGIRGKVGDAPITPDFVLRLGYAAGKVLASAPGRAASGARPTVLIGKDTRVSGYMLEAALEAGFSAAGVDVMLAGPMPTPGVAYLTRALRLSAGVVISASHNPYHDNGIKFFSADGNKLPDEIEAEIEAWLDKPLDCAASDGLGKARRLDDAAGRYIEFCKSTFPAAFDLRGMKLVVDCAHGAAYQVAPHVFHELGADVIPIGVAPNGFNINDGVGATAPDALMRAVRANHADLGIALDGDADRLLVVDHTGRLYNGDELLYVLVKDRIATNGQVEGAVGTLMTNFAVEVALKEAGVQFVRAAVGDRYVLEQLRERGWQLGAEGSGHILSLDRHSTGDGIVSALLVLAALKRSGKTLAQMLEGVTLFPQKLINVRMKPGADWKGSEAIRRAIDSAEQALSGSGRVLIRASGTEPVLRVMVEARQATDANRHAEAIADAVKQATA</sequence>
<proteinExistence type="inferred from homology"/>